<keyword id="KW-0963">Cytoplasm</keyword>
<keyword id="KW-0489">Methyltransferase</keyword>
<keyword id="KW-1185">Reference proteome</keyword>
<keyword id="KW-0949">S-adenosyl-L-methionine</keyword>
<keyword id="KW-0808">Transferase</keyword>
<accession>Q8KFW8</accession>
<dbReference type="EC" id="2.1.1.77" evidence="1"/>
<dbReference type="EMBL" id="AE006470">
    <property type="protein sequence ID" value="AAM71450.1"/>
    <property type="molecule type" value="Genomic_DNA"/>
</dbReference>
<dbReference type="RefSeq" id="NP_661108.1">
    <property type="nucleotide sequence ID" value="NC_002932.3"/>
</dbReference>
<dbReference type="SMR" id="Q8KFW8"/>
<dbReference type="STRING" id="194439.CT0202"/>
<dbReference type="EnsemblBacteria" id="AAM71450">
    <property type="protein sequence ID" value="AAM71450"/>
    <property type="gene ID" value="CT0202"/>
</dbReference>
<dbReference type="KEGG" id="cte:CT0202"/>
<dbReference type="PATRIC" id="fig|194439.7.peg.197"/>
<dbReference type="eggNOG" id="COG2518">
    <property type="taxonomic scope" value="Bacteria"/>
</dbReference>
<dbReference type="HOGENOM" id="CLU_055432_2_0_10"/>
<dbReference type="OrthoDB" id="9810066at2"/>
<dbReference type="Proteomes" id="UP000001007">
    <property type="component" value="Chromosome"/>
</dbReference>
<dbReference type="GO" id="GO:0005737">
    <property type="term" value="C:cytoplasm"/>
    <property type="evidence" value="ECO:0007669"/>
    <property type="project" value="UniProtKB-SubCell"/>
</dbReference>
<dbReference type="GO" id="GO:0004719">
    <property type="term" value="F:protein-L-isoaspartate (D-aspartate) O-methyltransferase activity"/>
    <property type="evidence" value="ECO:0007669"/>
    <property type="project" value="UniProtKB-UniRule"/>
</dbReference>
<dbReference type="GO" id="GO:0032259">
    <property type="term" value="P:methylation"/>
    <property type="evidence" value="ECO:0007669"/>
    <property type="project" value="UniProtKB-KW"/>
</dbReference>
<dbReference type="GO" id="GO:0036211">
    <property type="term" value="P:protein modification process"/>
    <property type="evidence" value="ECO:0007669"/>
    <property type="project" value="UniProtKB-UniRule"/>
</dbReference>
<dbReference type="GO" id="GO:0030091">
    <property type="term" value="P:protein repair"/>
    <property type="evidence" value="ECO:0007669"/>
    <property type="project" value="UniProtKB-UniRule"/>
</dbReference>
<dbReference type="CDD" id="cd02440">
    <property type="entry name" value="AdoMet_MTases"/>
    <property type="match status" value="1"/>
</dbReference>
<dbReference type="FunFam" id="3.40.50.150:FF:000010">
    <property type="entry name" value="Protein-L-isoaspartate O-methyltransferase"/>
    <property type="match status" value="1"/>
</dbReference>
<dbReference type="Gene3D" id="3.40.50.150">
    <property type="entry name" value="Vaccinia Virus protein VP39"/>
    <property type="match status" value="1"/>
</dbReference>
<dbReference type="HAMAP" id="MF_00090">
    <property type="entry name" value="PIMT"/>
    <property type="match status" value="1"/>
</dbReference>
<dbReference type="InterPro" id="IPR000682">
    <property type="entry name" value="PCMT"/>
</dbReference>
<dbReference type="InterPro" id="IPR029063">
    <property type="entry name" value="SAM-dependent_MTases_sf"/>
</dbReference>
<dbReference type="NCBIfam" id="TIGR00080">
    <property type="entry name" value="pimt"/>
    <property type="match status" value="1"/>
</dbReference>
<dbReference type="NCBIfam" id="NF001453">
    <property type="entry name" value="PRK00312.1"/>
    <property type="match status" value="1"/>
</dbReference>
<dbReference type="PANTHER" id="PTHR11579">
    <property type="entry name" value="PROTEIN-L-ISOASPARTATE O-METHYLTRANSFERASE"/>
    <property type="match status" value="1"/>
</dbReference>
<dbReference type="PANTHER" id="PTHR11579:SF0">
    <property type="entry name" value="PROTEIN-L-ISOASPARTATE(D-ASPARTATE) O-METHYLTRANSFERASE"/>
    <property type="match status" value="1"/>
</dbReference>
<dbReference type="Pfam" id="PF01135">
    <property type="entry name" value="PCMT"/>
    <property type="match status" value="1"/>
</dbReference>
<dbReference type="SUPFAM" id="SSF53335">
    <property type="entry name" value="S-adenosyl-L-methionine-dependent methyltransferases"/>
    <property type="match status" value="1"/>
</dbReference>
<dbReference type="PROSITE" id="PS01279">
    <property type="entry name" value="PCMT"/>
    <property type="match status" value="1"/>
</dbReference>
<reference key="1">
    <citation type="journal article" date="2002" name="Proc. Natl. Acad. Sci. U.S.A.">
        <title>The complete genome sequence of Chlorobium tepidum TLS, a photosynthetic, anaerobic, green-sulfur bacterium.</title>
        <authorList>
            <person name="Eisen J.A."/>
            <person name="Nelson K.E."/>
            <person name="Paulsen I.T."/>
            <person name="Heidelberg J.F."/>
            <person name="Wu M."/>
            <person name="Dodson R.J."/>
            <person name="DeBoy R.T."/>
            <person name="Gwinn M.L."/>
            <person name="Nelson W.C."/>
            <person name="Haft D.H."/>
            <person name="Hickey E.K."/>
            <person name="Peterson J.D."/>
            <person name="Durkin A.S."/>
            <person name="Kolonay J.F."/>
            <person name="Yang F."/>
            <person name="Holt I.E."/>
            <person name="Umayam L.A."/>
            <person name="Mason T.M."/>
            <person name="Brenner M."/>
            <person name="Shea T.P."/>
            <person name="Parksey D.S."/>
            <person name="Nierman W.C."/>
            <person name="Feldblyum T.V."/>
            <person name="Hansen C.L."/>
            <person name="Craven M.B."/>
            <person name="Radune D."/>
            <person name="Vamathevan J.J."/>
            <person name="Khouri H.M."/>
            <person name="White O."/>
            <person name="Gruber T.M."/>
            <person name="Ketchum K.A."/>
            <person name="Venter J.C."/>
            <person name="Tettelin H."/>
            <person name="Bryant D.A."/>
            <person name="Fraser C.M."/>
        </authorList>
    </citation>
    <scope>NUCLEOTIDE SEQUENCE [LARGE SCALE GENOMIC DNA]</scope>
    <source>
        <strain>ATCC 49652 / DSM 12025 / NBRC 103806 / TLS</strain>
    </source>
</reference>
<name>PIMT_CHLTE</name>
<organism>
    <name type="scientific">Chlorobaculum tepidum (strain ATCC 49652 / DSM 12025 / NBRC 103806 / TLS)</name>
    <name type="common">Chlorobium tepidum</name>
    <dbReference type="NCBI Taxonomy" id="194439"/>
    <lineage>
        <taxon>Bacteria</taxon>
        <taxon>Pseudomonadati</taxon>
        <taxon>Chlorobiota</taxon>
        <taxon>Chlorobiia</taxon>
        <taxon>Chlorobiales</taxon>
        <taxon>Chlorobiaceae</taxon>
        <taxon>Chlorobaculum</taxon>
    </lineage>
</organism>
<proteinExistence type="inferred from homology"/>
<evidence type="ECO:0000255" key="1">
    <source>
        <dbReference type="HAMAP-Rule" id="MF_00090"/>
    </source>
</evidence>
<gene>
    <name evidence="1" type="primary">pcm</name>
    <name type="ordered locus">CT0202</name>
</gene>
<sequence>MARERQEMVVELKRYGISNARVLDAFLTVRRHLFVDAQSRPYAYSDNAMPIGFGQTISQPYTVAYMTSLLVERVPSGKVLEIGTGSGYQAAILAELGYRVYTIERIAGLYAAAGRVLDALGLPVHPRLGDGTLGWPEEAPFDGIIVTAAAPREPHTLMSQLAEGGVLVVPIGDLGSQQMTVIRRRGERFEHEIFHNFAFVPLCGREGWADNNE</sequence>
<feature type="chain" id="PRO_0000351845" description="Protein-L-isoaspartate O-methyltransferase">
    <location>
        <begin position="1"/>
        <end position="213"/>
    </location>
</feature>
<feature type="active site" evidence="1">
    <location>
        <position position="58"/>
    </location>
</feature>
<protein>
    <recommendedName>
        <fullName evidence="1">Protein-L-isoaspartate O-methyltransferase</fullName>
        <ecNumber evidence="1">2.1.1.77</ecNumber>
    </recommendedName>
    <alternativeName>
        <fullName evidence="1">L-isoaspartyl protein carboxyl methyltransferase</fullName>
    </alternativeName>
    <alternativeName>
        <fullName evidence="1">Protein L-isoaspartyl methyltransferase</fullName>
    </alternativeName>
    <alternativeName>
        <fullName evidence="1">Protein-beta-aspartate methyltransferase</fullName>
        <shortName evidence="1">PIMT</shortName>
    </alternativeName>
</protein>
<comment type="function">
    <text evidence="1">Catalyzes the methyl esterification of L-isoaspartyl residues in peptides and proteins that result from spontaneous decomposition of normal L-aspartyl and L-asparaginyl residues. It plays a role in the repair and/or degradation of damaged proteins.</text>
</comment>
<comment type="catalytic activity">
    <reaction evidence="1">
        <text>[protein]-L-isoaspartate + S-adenosyl-L-methionine = [protein]-L-isoaspartate alpha-methyl ester + S-adenosyl-L-homocysteine</text>
        <dbReference type="Rhea" id="RHEA:12705"/>
        <dbReference type="Rhea" id="RHEA-COMP:12143"/>
        <dbReference type="Rhea" id="RHEA-COMP:12144"/>
        <dbReference type="ChEBI" id="CHEBI:57856"/>
        <dbReference type="ChEBI" id="CHEBI:59789"/>
        <dbReference type="ChEBI" id="CHEBI:90596"/>
        <dbReference type="ChEBI" id="CHEBI:90598"/>
        <dbReference type="EC" id="2.1.1.77"/>
    </reaction>
</comment>
<comment type="subcellular location">
    <subcellularLocation>
        <location evidence="1">Cytoplasm</location>
    </subcellularLocation>
</comment>
<comment type="similarity">
    <text evidence="1">Belongs to the methyltransferase superfamily. L-isoaspartyl/D-aspartyl protein methyltransferase family.</text>
</comment>